<accession>B8DP97</accession>
<name>GCSH_NITV9</name>
<evidence type="ECO:0000255" key="1">
    <source>
        <dbReference type="HAMAP-Rule" id="MF_00272"/>
    </source>
</evidence>
<evidence type="ECO:0000255" key="2">
    <source>
        <dbReference type="PROSITE-ProRule" id="PRU01066"/>
    </source>
</evidence>
<comment type="function">
    <text evidence="1">The glycine cleavage system catalyzes the degradation of glycine. The H protein shuttles the methylamine group of glycine from the P protein to the T protein.</text>
</comment>
<comment type="cofactor">
    <cofactor evidence="1">
        <name>(R)-lipoate</name>
        <dbReference type="ChEBI" id="CHEBI:83088"/>
    </cofactor>
    <text evidence="1">Binds 1 lipoyl cofactor covalently.</text>
</comment>
<comment type="subunit">
    <text evidence="1">The glycine cleavage system is composed of four proteins: P, T, L and H.</text>
</comment>
<comment type="similarity">
    <text evidence="1">Belongs to the GcvH family.</text>
</comment>
<reference key="1">
    <citation type="submission" date="2008-10" db="EMBL/GenBank/DDBJ databases">
        <title>Complete sequence of Desulfovibrio vulgaris str. 'Miyazaki F'.</title>
        <authorList>
            <person name="Lucas S."/>
            <person name="Copeland A."/>
            <person name="Lapidus A."/>
            <person name="Glavina del Rio T."/>
            <person name="Dalin E."/>
            <person name="Tice H."/>
            <person name="Bruce D."/>
            <person name="Goodwin L."/>
            <person name="Pitluck S."/>
            <person name="Sims D."/>
            <person name="Brettin T."/>
            <person name="Detter J.C."/>
            <person name="Han C."/>
            <person name="Larimer F."/>
            <person name="Land M."/>
            <person name="Hauser L."/>
            <person name="Kyrpides N."/>
            <person name="Mikhailova N."/>
            <person name="Hazen T.C."/>
            <person name="Richardson P."/>
        </authorList>
    </citation>
    <scope>NUCLEOTIDE SEQUENCE [LARGE SCALE GENOMIC DNA]</scope>
    <source>
        <strain>DSM 19637 / Miyazaki F</strain>
    </source>
</reference>
<organism>
    <name type="scientific">Nitratidesulfovibrio vulgaris (strain DSM 19637 / Miyazaki F)</name>
    <name type="common">Desulfovibrio vulgaris</name>
    <dbReference type="NCBI Taxonomy" id="883"/>
    <lineage>
        <taxon>Bacteria</taxon>
        <taxon>Pseudomonadati</taxon>
        <taxon>Thermodesulfobacteriota</taxon>
        <taxon>Desulfovibrionia</taxon>
        <taxon>Desulfovibrionales</taxon>
        <taxon>Desulfovibrionaceae</taxon>
        <taxon>Nitratidesulfovibrio</taxon>
    </lineage>
</organism>
<feature type="chain" id="PRO_1000119297" description="Glycine cleavage system H protein">
    <location>
        <begin position="1"/>
        <end position="127"/>
    </location>
</feature>
<feature type="domain" description="Lipoyl-binding" evidence="2">
    <location>
        <begin position="22"/>
        <end position="104"/>
    </location>
</feature>
<feature type="modified residue" description="N6-lipoyllysine" evidence="1">
    <location>
        <position position="63"/>
    </location>
</feature>
<proteinExistence type="inferred from homology"/>
<gene>
    <name evidence="1" type="primary">gcvH</name>
    <name type="ordered locus">DvMF_0225</name>
</gene>
<sequence length="127" mass="13410">MSIPADLLYTDTHEWVRIEGDEAVIGITQFAQEQLGDLTFVDLPAVGDTLATGQEMGSVESVKAASELYSPLAGTVSAVNDALSGAPELVNQSPYTDGWMVRVKLSATPEGLLSAADYEAVVAREAH</sequence>
<protein>
    <recommendedName>
        <fullName evidence="1">Glycine cleavage system H protein</fullName>
    </recommendedName>
</protein>
<dbReference type="EMBL" id="CP001197">
    <property type="protein sequence ID" value="ACL07184.1"/>
    <property type="molecule type" value="Genomic_DNA"/>
</dbReference>
<dbReference type="SMR" id="B8DP97"/>
<dbReference type="STRING" id="883.DvMF_0225"/>
<dbReference type="KEGG" id="dvm:DvMF_0225"/>
<dbReference type="eggNOG" id="COG0509">
    <property type="taxonomic scope" value="Bacteria"/>
</dbReference>
<dbReference type="HOGENOM" id="CLU_097408_2_2_7"/>
<dbReference type="OrthoDB" id="9796712at2"/>
<dbReference type="GO" id="GO:0005829">
    <property type="term" value="C:cytosol"/>
    <property type="evidence" value="ECO:0007669"/>
    <property type="project" value="TreeGrafter"/>
</dbReference>
<dbReference type="GO" id="GO:0005960">
    <property type="term" value="C:glycine cleavage complex"/>
    <property type="evidence" value="ECO:0007669"/>
    <property type="project" value="InterPro"/>
</dbReference>
<dbReference type="GO" id="GO:0019464">
    <property type="term" value="P:glycine decarboxylation via glycine cleavage system"/>
    <property type="evidence" value="ECO:0007669"/>
    <property type="project" value="UniProtKB-UniRule"/>
</dbReference>
<dbReference type="CDD" id="cd06848">
    <property type="entry name" value="GCS_H"/>
    <property type="match status" value="1"/>
</dbReference>
<dbReference type="Gene3D" id="2.40.50.100">
    <property type="match status" value="1"/>
</dbReference>
<dbReference type="HAMAP" id="MF_00272">
    <property type="entry name" value="GcvH"/>
    <property type="match status" value="1"/>
</dbReference>
<dbReference type="InterPro" id="IPR003016">
    <property type="entry name" value="2-oxoA_DH_lipoyl-BS"/>
</dbReference>
<dbReference type="InterPro" id="IPR000089">
    <property type="entry name" value="Biotin_lipoyl"/>
</dbReference>
<dbReference type="InterPro" id="IPR002930">
    <property type="entry name" value="GCV_H"/>
</dbReference>
<dbReference type="InterPro" id="IPR033753">
    <property type="entry name" value="GCV_H/Fam206"/>
</dbReference>
<dbReference type="InterPro" id="IPR017453">
    <property type="entry name" value="GCV_H_sub"/>
</dbReference>
<dbReference type="InterPro" id="IPR011053">
    <property type="entry name" value="Single_hybrid_motif"/>
</dbReference>
<dbReference type="NCBIfam" id="TIGR00527">
    <property type="entry name" value="gcvH"/>
    <property type="match status" value="1"/>
</dbReference>
<dbReference type="NCBIfam" id="NF002270">
    <property type="entry name" value="PRK01202.1"/>
    <property type="match status" value="1"/>
</dbReference>
<dbReference type="PANTHER" id="PTHR11715">
    <property type="entry name" value="GLYCINE CLEAVAGE SYSTEM H PROTEIN"/>
    <property type="match status" value="1"/>
</dbReference>
<dbReference type="PANTHER" id="PTHR11715:SF3">
    <property type="entry name" value="GLYCINE CLEAVAGE SYSTEM H PROTEIN-RELATED"/>
    <property type="match status" value="1"/>
</dbReference>
<dbReference type="Pfam" id="PF01597">
    <property type="entry name" value="GCV_H"/>
    <property type="match status" value="1"/>
</dbReference>
<dbReference type="SUPFAM" id="SSF51230">
    <property type="entry name" value="Single hybrid motif"/>
    <property type="match status" value="1"/>
</dbReference>
<dbReference type="PROSITE" id="PS50968">
    <property type="entry name" value="BIOTINYL_LIPOYL"/>
    <property type="match status" value="1"/>
</dbReference>
<dbReference type="PROSITE" id="PS00189">
    <property type="entry name" value="LIPOYL"/>
    <property type="match status" value="1"/>
</dbReference>
<keyword id="KW-0450">Lipoyl</keyword>